<accession>Q5UPC8</accession>
<sequence length="182" mass="20884">MAKYYLIHGVVEDKPEKIVKILSDGYLFASSYSTQQGFSGIPLDYVYFSRLGDVNVFMGGFKFILSTKILYKRSFRYALNWVGSDINRTTKINYRYDNVDKVLDEINTHITNGTYSLSPSIDTLHEIILKKKVNLHRYLVAVSDGNYLTPEITDYLKTNYPNVKILTEIPSSADKLSEILEK</sequence>
<comment type="similarity">
    <text evidence="1">Belongs to the mimivirus L28/L54 family.</text>
</comment>
<organismHost>
    <name type="scientific">Acanthamoeba polyphaga</name>
    <name type="common">Amoeba</name>
    <dbReference type="NCBI Taxonomy" id="5757"/>
</organismHost>
<evidence type="ECO:0000305" key="1"/>
<reference key="1">
    <citation type="journal article" date="2004" name="Science">
        <title>The 1.2-megabase genome sequence of Mimivirus.</title>
        <authorList>
            <person name="Raoult D."/>
            <person name="Audic S."/>
            <person name="Robert C."/>
            <person name="Abergel C."/>
            <person name="Renesto P."/>
            <person name="Ogata H."/>
            <person name="La Scola B."/>
            <person name="Susan M."/>
            <person name="Claverie J.-M."/>
        </authorList>
    </citation>
    <scope>NUCLEOTIDE SEQUENCE [LARGE SCALE GENOMIC DNA]</scope>
    <source>
        <strain>Rowbotham-Bradford</strain>
    </source>
</reference>
<proteinExistence type="inferred from homology"/>
<name>YL054_MIMIV</name>
<organism>
    <name type="scientific">Acanthamoeba polyphaga mimivirus</name>
    <name type="common">APMV</name>
    <dbReference type="NCBI Taxonomy" id="212035"/>
    <lineage>
        <taxon>Viruses</taxon>
        <taxon>Varidnaviria</taxon>
        <taxon>Bamfordvirae</taxon>
        <taxon>Nucleocytoviricota</taxon>
        <taxon>Megaviricetes</taxon>
        <taxon>Imitervirales</taxon>
        <taxon>Mimiviridae</taxon>
        <taxon>Megamimivirinae</taxon>
        <taxon>Mimivirus</taxon>
        <taxon>Mimivirus bradfordmassiliense</taxon>
    </lineage>
</organism>
<dbReference type="EMBL" id="AY653733">
    <property type="protein sequence ID" value="AAV50329.1"/>
    <property type="molecule type" value="Genomic_DNA"/>
</dbReference>
<dbReference type="KEGG" id="vg:9924642"/>
<dbReference type="OrthoDB" id="17099at10239"/>
<dbReference type="Proteomes" id="UP000001134">
    <property type="component" value="Genome"/>
</dbReference>
<dbReference type="InterPro" id="IPR043886">
    <property type="entry name" value="DUF5846"/>
</dbReference>
<dbReference type="Pfam" id="PF19164">
    <property type="entry name" value="DUF5846"/>
    <property type="match status" value="1"/>
</dbReference>
<keyword id="KW-1185">Reference proteome</keyword>
<protein>
    <recommendedName>
        <fullName>Uncharacterized protein L54</fullName>
    </recommendedName>
</protein>
<gene>
    <name type="ordered locus">MIMI_L54</name>
</gene>
<feature type="chain" id="PRO_0000071195" description="Uncharacterized protein L54">
    <location>
        <begin position="1"/>
        <end position="182"/>
    </location>
</feature>